<organism>
    <name type="scientific">Nicotiana tomentosiformis</name>
    <name type="common">Tobacco</name>
    <dbReference type="NCBI Taxonomy" id="4098"/>
    <lineage>
        <taxon>Eukaryota</taxon>
        <taxon>Viridiplantae</taxon>
        <taxon>Streptophyta</taxon>
        <taxon>Embryophyta</taxon>
        <taxon>Tracheophyta</taxon>
        <taxon>Spermatophyta</taxon>
        <taxon>Magnoliopsida</taxon>
        <taxon>eudicotyledons</taxon>
        <taxon>Gunneridae</taxon>
        <taxon>Pentapetalae</taxon>
        <taxon>asterids</taxon>
        <taxon>lamiids</taxon>
        <taxon>Solanales</taxon>
        <taxon>Solanaceae</taxon>
        <taxon>Nicotianoideae</taxon>
        <taxon>Nicotianeae</taxon>
        <taxon>Nicotiana</taxon>
    </lineage>
</organism>
<comment type="function">
    <text evidence="1">This b-type cytochrome is tightly associated with the reaction center of photosystem II (PSII). PSII is a light-driven water:plastoquinone oxidoreductase that uses light energy to abstract electrons from H(2)O, generating O(2) and a proton gradient subsequently used for ATP formation. It consists of a core antenna complex that captures photons, and an electron transfer chain that converts photonic excitation into a charge separation.</text>
</comment>
<comment type="cofactor">
    <cofactor evidence="1">
        <name>heme b</name>
        <dbReference type="ChEBI" id="CHEBI:60344"/>
    </cofactor>
    <text evidence="1">With its partner (PsbE) binds heme. PSII binds additional chlorophylls, carotenoids and specific lipids.</text>
</comment>
<comment type="subunit">
    <text evidence="1">Heterodimer of an alpha subunit and a beta subunit. PSII is composed of 1 copy each of membrane proteins PsbA, PsbB, PsbC, PsbD, PsbE, PsbF, PsbH, PsbI, PsbJ, PsbK, PsbL, PsbM, PsbT, PsbX, PsbY, PsbZ, Psb30/Ycf12, at least 3 peripheral proteins of the oxygen-evolving complex and a large number of cofactors. It forms dimeric complexes.</text>
</comment>
<comment type="subcellular location">
    <subcellularLocation>
        <location evidence="1">Plastid</location>
        <location evidence="1">Chloroplast thylakoid membrane</location>
        <topology evidence="1">Single-pass membrane protein</topology>
    </subcellularLocation>
</comment>
<comment type="similarity">
    <text evidence="1">Belongs to the PsbE/PsbF family.</text>
</comment>
<reference key="1">
    <citation type="journal article" date="2001" name="EMBO J.">
        <title>Heterologous, splicing-dependent RNA editing in chloroplasts: allotetraploidy provides trans-factors.</title>
        <authorList>
            <person name="Schmitz-Linneweber C."/>
            <person name="Tillich M."/>
            <person name="Herrmann R.G."/>
            <person name="Maier R.M."/>
        </authorList>
    </citation>
    <scope>NUCLEOTIDE SEQUENCE [GENOMIC DNA]</scope>
</reference>
<reference key="2">
    <citation type="journal article" date="2006" name="Mol. Genet. Genomics">
        <title>The chloroplast genome of Nicotiana sylvestris and Nicotiana tomentosiformis: complete sequencing confirms that the Nicotiana sylvestris progenitor is the maternal genome donor of Nicotiana tabacum.</title>
        <authorList>
            <person name="Yukawa M."/>
            <person name="Tsudzuki T."/>
            <person name="Sugiura M."/>
        </authorList>
    </citation>
    <scope>NUCLEOTIDE SEQUENCE [LARGE SCALE GENOMIC DNA]</scope>
</reference>
<accession>Q7HML5</accession>
<accession>Q33C16</accession>
<sequence>MTIDRTYPIFTVRWLAVHGLAVPTVFFLGSISAMQFIQR</sequence>
<evidence type="ECO:0000255" key="1">
    <source>
        <dbReference type="HAMAP-Rule" id="MF_00643"/>
    </source>
</evidence>
<name>PSBF_NICTO</name>
<proteinExistence type="inferred from homology"/>
<protein>
    <recommendedName>
        <fullName evidence="1">Cytochrome b559 subunit beta</fullName>
    </recommendedName>
    <alternativeName>
        <fullName evidence="1">PSII reaction center subunit VI</fullName>
    </alternativeName>
</protein>
<feature type="chain" id="PRO_0000200427" description="Cytochrome b559 subunit beta">
    <location>
        <begin position="1"/>
        <end position="39"/>
    </location>
</feature>
<feature type="transmembrane region" description="Helical" evidence="1">
    <location>
        <begin position="14"/>
        <end position="30"/>
    </location>
</feature>
<feature type="binding site" description="axial binding residue" evidence="1">
    <location>
        <position position="18"/>
    </location>
    <ligand>
        <name>heme</name>
        <dbReference type="ChEBI" id="CHEBI:30413"/>
        <note>ligand shared with alpha subunit</note>
    </ligand>
    <ligandPart>
        <name>Fe</name>
        <dbReference type="ChEBI" id="CHEBI:18248"/>
    </ligandPart>
</feature>
<dbReference type="EMBL" id="AJ315335">
    <property type="protein sequence ID" value="CAC51375.1"/>
    <property type="molecule type" value="Genomic_DNA"/>
</dbReference>
<dbReference type="EMBL" id="AB240139">
    <property type="protein sequence ID" value="BAE48019.1"/>
    <property type="molecule type" value="Genomic_DNA"/>
</dbReference>
<dbReference type="RefSeq" id="YP_398881.1">
    <property type="nucleotide sequence ID" value="NC_007602.1"/>
</dbReference>
<dbReference type="SMR" id="Q7HML5"/>
<dbReference type="GeneID" id="3776372"/>
<dbReference type="KEGG" id="nto:3776372"/>
<dbReference type="OrthoDB" id="77at2759"/>
<dbReference type="GO" id="GO:0009535">
    <property type="term" value="C:chloroplast thylakoid membrane"/>
    <property type="evidence" value="ECO:0007669"/>
    <property type="project" value="UniProtKB-SubCell"/>
</dbReference>
<dbReference type="GO" id="GO:0009539">
    <property type="term" value="C:photosystem II reaction center"/>
    <property type="evidence" value="ECO:0007669"/>
    <property type="project" value="InterPro"/>
</dbReference>
<dbReference type="GO" id="GO:0009055">
    <property type="term" value="F:electron transfer activity"/>
    <property type="evidence" value="ECO:0007669"/>
    <property type="project" value="UniProtKB-UniRule"/>
</dbReference>
<dbReference type="GO" id="GO:0020037">
    <property type="term" value="F:heme binding"/>
    <property type="evidence" value="ECO:0007669"/>
    <property type="project" value="InterPro"/>
</dbReference>
<dbReference type="GO" id="GO:0005506">
    <property type="term" value="F:iron ion binding"/>
    <property type="evidence" value="ECO:0007669"/>
    <property type="project" value="UniProtKB-UniRule"/>
</dbReference>
<dbReference type="GO" id="GO:0009767">
    <property type="term" value="P:photosynthetic electron transport chain"/>
    <property type="evidence" value="ECO:0007669"/>
    <property type="project" value="InterPro"/>
</dbReference>
<dbReference type="HAMAP" id="MF_00643">
    <property type="entry name" value="PSII_PsbF"/>
    <property type="match status" value="1"/>
</dbReference>
<dbReference type="InterPro" id="IPR006241">
    <property type="entry name" value="PSII_cyt_b559_bsu"/>
</dbReference>
<dbReference type="InterPro" id="IPR006216">
    <property type="entry name" value="PSII_cyt_b559_CS"/>
</dbReference>
<dbReference type="InterPro" id="IPR013081">
    <property type="entry name" value="PSII_cyt_b559_N"/>
</dbReference>
<dbReference type="NCBIfam" id="TIGR01333">
    <property type="entry name" value="cyt_b559_beta"/>
    <property type="match status" value="1"/>
</dbReference>
<dbReference type="Pfam" id="PF00283">
    <property type="entry name" value="Cytochrom_B559"/>
    <property type="match status" value="1"/>
</dbReference>
<dbReference type="PIRSF" id="PIRSF000037">
    <property type="entry name" value="PsbF"/>
    <property type="match status" value="1"/>
</dbReference>
<dbReference type="SUPFAM" id="SSF161045">
    <property type="entry name" value="Cytochrome b559 subunits"/>
    <property type="match status" value="1"/>
</dbReference>
<dbReference type="PROSITE" id="PS00537">
    <property type="entry name" value="CYTOCHROME_B559"/>
    <property type="match status" value="1"/>
</dbReference>
<keyword id="KW-0150">Chloroplast</keyword>
<keyword id="KW-0249">Electron transport</keyword>
<keyword id="KW-0349">Heme</keyword>
<keyword id="KW-0408">Iron</keyword>
<keyword id="KW-0472">Membrane</keyword>
<keyword id="KW-0479">Metal-binding</keyword>
<keyword id="KW-0602">Photosynthesis</keyword>
<keyword id="KW-0604">Photosystem II</keyword>
<keyword id="KW-0934">Plastid</keyword>
<keyword id="KW-0793">Thylakoid</keyword>
<keyword id="KW-0812">Transmembrane</keyword>
<keyword id="KW-1133">Transmembrane helix</keyword>
<keyword id="KW-0813">Transport</keyword>
<geneLocation type="chloroplast"/>
<gene>
    <name evidence="1" type="primary">psbF</name>
</gene>